<dbReference type="EMBL" id="BA000022">
    <property type="protein sequence ID" value="BAA10361.1"/>
    <property type="molecule type" value="Genomic_DNA"/>
</dbReference>
<dbReference type="PIR" id="S76515">
    <property type="entry name" value="S76515"/>
</dbReference>
<dbReference type="SMR" id="Q55720"/>
<dbReference type="STRING" id="1148.gene:10499862"/>
<dbReference type="PaxDb" id="1148-1001630"/>
<dbReference type="EnsemblBacteria" id="BAA10361">
    <property type="protein sequence ID" value="BAA10361"/>
    <property type="gene ID" value="BAA10361"/>
</dbReference>
<dbReference type="KEGG" id="syn:sll0608"/>
<dbReference type="eggNOG" id="ENOG5032RQE">
    <property type="taxonomic scope" value="Bacteria"/>
</dbReference>
<dbReference type="InParanoid" id="Q55720"/>
<dbReference type="PhylomeDB" id="Q55720"/>
<dbReference type="Proteomes" id="UP000001425">
    <property type="component" value="Chromosome"/>
</dbReference>
<dbReference type="GO" id="GO:0005886">
    <property type="term" value="C:plasma membrane"/>
    <property type="evidence" value="ECO:0007669"/>
    <property type="project" value="UniProtKB-SubCell"/>
</dbReference>
<dbReference type="InterPro" id="IPR019634">
    <property type="entry name" value="Uncharacterised_Ycf49"/>
</dbReference>
<dbReference type="PANTHER" id="PTHR33833">
    <property type="entry name" value="NUCLEOLAR-LIKE PROTEIN-RELATED"/>
    <property type="match status" value="1"/>
</dbReference>
<dbReference type="PANTHER" id="PTHR33833:SF3">
    <property type="entry name" value="YCF49-LIKE PROTEIN"/>
    <property type="match status" value="1"/>
</dbReference>
<dbReference type="Pfam" id="PF10693">
    <property type="entry name" value="DUF2499"/>
    <property type="match status" value="1"/>
</dbReference>
<proteinExistence type="inferred from homology"/>
<comment type="subcellular location">
    <subcellularLocation>
        <location evidence="2">Cell membrane</location>
        <topology evidence="2">Multi-pass membrane protein</topology>
    </subcellularLocation>
</comment>
<comment type="similarity">
    <text evidence="2">Belongs to the ycf49 family.</text>
</comment>
<name>YC49L_SYNY3</name>
<keyword id="KW-1003">Cell membrane</keyword>
<keyword id="KW-0472">Membrane</keyword>
<keyword id="KW-1185">Reference proteome</keyword>
<keyword id="KW-0812">Transmembrane</keyword>
<keyword id="KW-1133">Transmembrane helix</keyword>
<protein>
    <recommendedName>
        <fullName>Ycf49-like protein</fullName>
    </recommendedName>
</protein>
<sequence length="104" mass="11517">MNALSIPTWMVHVSSVIEWIVAIALVSRYATKAGYGHWRALAWGMVPALVSATCACTWHFFDNASQLDWLVTLQALTTVIGNITLCLAAWWIYRQSAQPSAPKP</sequence>
<accession>Q55720</accession>
<reference key="1">
    <citation type="journal article" date="1995" name="DNA Res.">
        <title>Sequence analysis of the genome of the unicellular cyanobacterium Synechocystis sp. strain PCC6803. I. Sequence features in the 1 Mb region from map positions 64% to 92% of the genome.</title>
        <authorList>
            <person name="Kaneko T."/>
            <person name="Tanaka A."/>
            <person name="Sato S."/>
            <person name="Kotani H."/>
            <person name="Sazuka T."/>
            <person name="Miyajima N."/>
            <person name="Sugiura M."/>
            <person name="Tabata S."/>
        </authorList>
    </citation>
    <scope>NUCLEOTIDE SEQUENCE [LARGE SCALE GENOMIC DNA]</scope>
    <source>
        <strain>ATCC 27184 / PCC 6803 / N-1</strain>
    </source>
</reference>
<reference key="2">
    <citation type="journal article" date="1996" name="DNA Res.">
        <title>Sequence analysis of the genome of the unicellular cyanobacterium Synechocystis sp. strain PCC6803. II. Sequence determination of the entire genome and assignment of potential protein-coding regions.</title>
        <authorList>
            <person name="Kaneko T."/>
            <person name="Sato S."/>
            <person name="Kotani H."/>
            <person name="Tanaka A."/>
            <person name="Asamizu E."/>
            <person name="Nakamura Y."/>
            <person name="Miyajima N."/>
            <person name="Hirosawa M."/>
            <person name="Sugiura M."/>
            <person name="Sasamoto S."/>
            <person name="Kimura T."/>
            <person name="Hosouchi T."/>
            <person name="Matsuno A."/>
            <person name="Muraki A."/>
            <person name="Nakazaki N."/>
            <person name="Naruo K."/>
            <person name="Okumura S."/>
            <person name="Shimpo S."/>
            <person name="Takeuchi C."/>
            <person name="Wada T."/>
            <person name="Watanabe A."/>
            <person name="Yamada M."/>
            <person name="Yasuda M."/>
            <person name="Tabata S."/>
        </authorList>
    </citation>
    <scope>NUCLEOTIDE SEQUENCE [LARGE SCALE GENOMIC DNA]</scope>
    <source>
        <strain>ATCC 27184 / PCC 6803 / Kazusa</strain>
    </source>
</reference>
<gene>
    <name type="ordered locus">sll0608</name>
</gene>
<organism>
    <name type="scientific">Synechocystis sp. (strain ATCC 27184 / PCC 6803 / Kazusa)</name>
    <dbReference type="NCBI Taxonomy" id="1111708"/>
    <lineage>
        <taxon>Bacteria</taxon>
        <taxon>Bacillati</taxon>
        <taxon>Cyanobacteriota</taxon>
        <taxon>Cyanophyceae</taxon>
        <taxon>Synechococcales</taxon>
        <taxon>Merismopediaceae</taxon>
        <taxon>Synechocystis</taxon>
    </lineage>
</organism>
<feature type="chain" id="PRO_0000217377" description="Ycf49-like protein">
    <location>
        <begin position="1"/>
        <end position="104"/>
    </location>
</feature>
<feature type="transmembrane region" description="Helical" evidence="1">
    <location>
        <begin position="6"/>
        <end position="26"/>
    </location>
</feature>
<feature type="transmembrane region" description="Helical" evidence="1">
    <location>
        <begin position="41"/>
        <end position="61"/>
    </location>
</feature>
<feature type="transmembrane region" description="Helical" evidence="1">
    <location>
        <begin position="73"/>
        <end position="93"/>
    </location>
</feature>
<evidence type="ECO:0000255" key="1"/>
<evidence type="ECO:0000305" key="2"/>